<reference key="1">
    <citation type="journal article" date="2002" name="Nucleic Acids Res.">
        <title>Genome sequence of Shigella flexneri 2a: insights into pathogenicity through comparison with genomes of Escherichia coli K12 and O157.</title>
        <authorList>
            <person name="Jin Q."/>
            <person name="Yuan Z."/>
            <person name="Xu J."/>
            <person name="Wang Y."/>
            <person name="Shen Y."/>
            <person name="Lu W."/>
            <person name="Wang J."/>
            <person name="Liu H."/>
            <person name="Yang J."/>
            <person name="Yang F."/>
            <person name="Zhang X."/>
            <person name="Zhang J."/>
            <person name="Yang G."/>
            <person name="Wu H."/>
            <person name="Qu D."/>
            <person name="Dong J."/>
            <person name="Sun L."/>
            <person name="Xue Y."/>
            <person name="Zhao A."/>
            <person name="Gao Y."/>
            <person name="Zhu J."/>
            <person name="Kan B."/>
            <person name="Ding K."/>
            <person name="Chen S."/>
            <person name="Cheng H."/>
            <person name="Yao Z."/>
            <person name="He B."/>
            <person name="Chen R."/>
            <person name="Ma D."/>
            <person name="Qiang B."/>
            <person name="Wen Y."/>
            <person name="Hou Y."/>
            <person name="Yu J."/>
        </authorList>
    </citation>
    <scope>NUCLEOTIDE SEQUENCE [LARGE SCALE GENOMIC DNA]</scope>
    <source>
        <strain>301 / Serotype 2a</strain>
    </source>
</reference>
<reference key="2">
    <citation type="journal article" date="2003" name="Infect. Immun.">
        <title>Complete genome sequence and comparative genomics of Shigella flexneri serotype 2a strain 2457T.</title>
        <authorList>
            <person name="Wei J."/>
            <person name="Goldberg M.B."/>
            <person name="Burland V."/>
            <person name="Venkatesan M.M."/>
            <person name="Deng W."/>
            <person name="Fournier G."/>
            <person name="Mayhew G.F."/>
            <person name="Plunkett G. III"/>
            <person name="Rose D.J."/>
            <person name="Darling A."/>
            <person name="Mau B."/>
            <person name="Perna N.T."/>
            <person name="Payne S.M."/>
            <person name="Runyen-Janecky L.J."/>
            <person name="Zhou S."/>
            <person name="Schwartz D.C."/>
            <person name="Blattner F.R."/>
        </authorList>
    </citation>
    <scope>NUCLEOTIDE SEQUENCE [LARGE SCALE GENOMIC DNA]</scope>
    <source>
        <strain>ATCC 700930 / 2457T / Serotype 2a</strain>
    </source>
</reference>
<comment type="function">
    <text evidence="1">Provides the cells with the ability to utilize trehalose at high osmolarity by splitting it into glucose molecules that can subsequently be taken up by the phosphotransferase-mediated uptake system.</text>
</comment>
<comment type="catalytic activity">
    <reaction evidence="1">
        <text>alpha,alpha-trehalose + H2O = alpha-D-glucose + beta-D-glucose</text>
        <dbReference type="Rhea" id="RHEA:32675"/>
        <dbReference type="ChEBI" id="CHEBI:15377"/>
        <dbReference type="ChEBI" id="CHEBI:15903"/>
        <dbReference type="ChEBI" id="CHEBI:16551"/>
        <dbReference type="ChEBI" id="CHEBI:17925"/>
        <dbReference type="EC" id="3.2.1.28"/>
    </reaction>
</comment>
<comment type="subunit">
    <text evidence="1">Monomer.</text>
</comment>
<comment type="subcellular location">
    <subcellularLocation>
        <location evidence="1">Periplasm</location>
    </subcellularLocation>
</comment>
<comment type="similarity">
    <text evidence="1">Belongs to the glycosyl hydrolase 37 family.</text>
</comment>
<keyword id="KW-0326">Glycosidase</keyword>
<keyword id="KW-0378">Hydrolase</keyword>
<keyword id="KW-0574">Periplasm</keyword>
<keyword id="KW-1185">Reference proteome</keyword>
<keyword id="KW-0732">Signal</keyword>
<proteinExistence type="inferred from homology"/>
<evidence type="ECO:0000255" key="1">
    <source>
        <dbReference type="HAMAP-Rule" id="MF_01060"/>
    </source>
</evidence>
<evidence type="ECO:0000256" key="2">
    <source>
        <dbReference type="SAM" id="MobiDB-lite"/>
    </source>
</evidence>
<evidence type="ECO:0000305" key="3"/>
<organism>
    <name type="scientific">Shigella flexneri</name>
    <dbReference type="NCBI Taxonomy" id="623"/>
    <lineage>
        <taxon>Bacteria</taxon>
        <taxon>Pseudomonadati</taxon>
        <taxon>Pseudomonadota</taxon>
        <taxon>Gammaproteobacteria</taxon>
        <taxon>Enterobacterales</taxon>
        <taxon>Enterobacteriaceae</taxon>
        <taxon>Shigella</taxon>
    </lineage>
</organism>
<gene>
    <name evidence="1" type="primary">treA</name>
    <name type="ordered locus">SF1200</name>
    <name type="ordered locus">S1284</name>
</gene>
<feature type="signal peptide" evidence="1">
    <location>
        <begin position="1"/>
        <end position="30"/>
    </location>
</feature>
<feature type="chain" id="PRO_0000012048" description="Periplasmic trehalase">
    <location>
        <begin position="31"/>
        <end position="565"/>
    </location>
</feature>
<feature type="region of interest" description="Disordered" evidence="2">
    <location>
        <begin position="540"/>
        <end position="565"/>
    </location>
</feature>
<feature type="compositionally biased region" description="Polar residues" evidence="2">
    <location>
        <begin position="548"/>
        <end position="565"/>
    </location>
</feature>
<feature type="active site" description="Proton donor/acceptor" evidence="1">
    <location>
        <position position="312"/>
    </location>
</feature>
<feature type="active site" description="Proton donor/acceptor" evidence="1">
    <location>
        <position position="496"/>
    </location>
</feature>
<feature type="binding site" evidence="1">
    <location>
        <position position="152"/>
    </location>
    <ligand>
        <name>substrate</name>
    </ligand>
</feature>
<feature type="binding site" evidence="1">
    <location>
        <begin position="159"/>
        <end position="160"/>
    </location>
    <ligand>
        <name>substrate</name>
    </ligand>
</feature>
<feature type="binding site" evidence="1">
    <location>
        <position position="196"/>
    </location>
    <ligand>
        <name>substrate</name>
    </ligand>
</feature>
<feature type="binding site" evidence="1">
    <location>
        <begin position="205"/>
        <end position="207"/>
    </location>
    <ligand>
        <name>substrate</name>
    </ligand>
</feature>
<feature type="binding site" evidence="1">
    <location>
        <begin position="277"/>
        <end position="279"/>
    </location>
    <ligand>
        <name>substrate</name>
    </ligand>
</feature>
<feature type="binding site" evidence="1">
    <location>
        <position position="310"/>
    </location>
    <ligand>
        <name>substrate</name>
    </ligand>
</feature>
<feature type="binding site" evidence="1">
    <location>
        <position position="511"/>
    </location>
    <ligand>
        <name>substrate</name>
    </ligand>
</feature>
<feature type="sequence conflict" description="In Ref. 2; AAP16699." evidence="3" ref="2">
    <original>V</original>
    <variation>I</variation>
    <location>
        <position position="177"/>
    </location>
</feature>
<name>TREA_SHIFL</name>
<sequence>MKSPAPSRPQKMALIPACIFLCFAALSVQAEETPVTPQPPDILLGPLFNDVQNVKLFPDQKTFADAVPNSDPLMILADYRMQQNQSGFDLRHFVNVNFTLPKEGEKYVPPEGQSLREHIDGLWPVLTRSTENTEKWDSLLPLPEPYVVPGGRFREVYYWDNYFTMLGLAESGHWDKVADMVANFAHEINTYGHIPNGNRSYYLSRSQPPFFALMVELLAQHEGDAALKQYLPQMQKEYAYWMDGVENLQAGQQEKRVVKLQDSTLLNRYWDDRDTPRPESWVEDIATAKSNPNRPATEIYRDLRSAAASGWDFSSRWMDNPQQLNTLRTTSIVPVDLNSLMFKMEKILARASKAAGDNAMANQYETLANARQKGIEKYLWNDQQGWYADYDLKSHKVRNQLTAAALFPLYVNAAAKDRANKMATATKTHLLQPGGLNTTSVKSGQQWDAPNGWAPLQWVATEGLQNYGQKEVAMDISWHFLTNVQHTYDREKKLVEKYDVSTTGTGGGGGEYPLQDGFGWTNGVTLKMLDLICPKEQPCDNVPATHPTVKSATTQPSTKEAQPTP</sequence>
<accession>Q83RP6</accession>
<dbReference type="EC" id="3.2.1.28" evidence="1"/>
<dbReference type="EMBL" id="AE005674">
    <property type="protein sequence ID" value="AAN42813.2"/>
    <property type="molecule type" value="Genomic_DNA"/>
</dbReference>
<dbReference type="EMBL" id="AE014073">
    <property type="protein sequence ID" value="AAP16699.1"/>
    <property type="molecule type" value="Genomic_DNA"/>
</dbReference>
<dbReference type="RefSeq" id="NP_707106.2">
    <property type="nucleotide sequence ID" value="NC_004337.2"/>
</dbReference>
<dbReference type="RefSeq" id="WP_000841730.1">
    <property type="nucleotide sequence ID" value="NZ_PUHB01000031.1"/>
</dbReference>
<dbReference type="SMR" id="Q83RP6"/>
<dbReference type="STRING" id="198214.SF1200"/>
<dbReference type="PaxDb" id="198214-SF1200"/>
<dbReference type="GeneID" id="1024133"/>
<dbReference type="KEGG" id="sfl:SF1200"/>
<dbReference type="KEGG" id="sfx:S1284"/>
<dbReference type="PATRIC" id="fig|198214.7.peg.1416"/>
<dbReference type="HOGENOM" id="CLU_006451_3_1_6"/>
<dbReference type="Proteomes" id="UP000001006">
    <property type="component" value="Chromosome"/>
</dbReference>
<dbReference type="Proteomes" id="UP000002673">
    <property type="component" value="Chromosome"/>
</dbReference>
<dbReference type="GO" id="GO:0042597">
    <property type="term" value="C:periplasmic space"/>
    <property type="evidence" value="ECO:0007669"/>
    <property type="project" value="UniProtKB-SubCell"/>
</dbReference>
<dbReference type="GO" id="GO:0004555">
    <property type="term" value="F:alpha,alpha-trehalase activity"/>
    <property type="evidence" value="ECO:0007669"/>
    <property type="project" value="UniProtKB-UniRule"/>
</dbReference>
<dbReference type="GO" id="GO:0071474">
    <property type="term" value="P:cellular hyperosmotic response"/>
    <property type="evidence" value="ECO:0007669"/>
    <property type="project" value="InterPro"/>
</dbReference>
<dbReference type="GO" id="GO:0005993">
    <property type="term" value="P:trehalose catabolic process"/>
    <property type="evidence" value="ECO:0007669"/>
    <property type="project" value="InterPro"/>
</dbReference>
<dbReference type="FunFam" id="1.50.10.10:FF:000003">
    <property type="entry name" value="Cytoplasmic trehalase"/>
    <property type="match status" value="1"/>
</dbReference>
<dbReference type="Gene3D" id="1.50.10.10">
    <property type="match status" value="1"/>
</dbReference>
<dbReference type="HAMAP" id="MF_01060">
    <property type="entry name" value="Peripl_trehalase"/>
    <property type="match status" value="1"/>
</dbReference>
<dbReference type="InterPro" id="IPR008928">
    <property type="entry name" value="6-hairpin_glycosidase_sf"/>
</dbReference>
<dbReference type="InterPro" id="IPR012341">
    <property type="entry name" value="6hp_glycosidase-like_sf"/>
</dbReference>
<dbReference type="InterPro" id="IPR001661">
    <property type="entry name" value="Glyco_hydro_37"/>
</dbReference>
<dbReference type="InterPro" id="IPR018232">
    <property type="entry name" value="Glyco_hydro_37_CS"/>
</dbReference>
<dbReference type="InterPro" id="IPR023720">
    <property type="entry name" value="Trehalase_periplasmic"/>
</dbReference>
<dbReference type="NCBIfam" id="NF009773">
    <property type="entry name" value="PRK13270.1"/>
    <property type="match status" value="1"/>
</dbReference>
<dbReference type="NCBIfam" id="NF009774">
    <property type="entry name" value="PRK13271.1"/>
    <property type="match status" value="1"/>
</dbReference>
<dbReference type="PANTHER" id="PTHR23403">
    <property type="entry name" value="TREHALASE"/>
    <property type="match status" value="1"/>
</dbReference>
<dbReference type="PANTHER" id="PTHR23403:SF1">
    <property type="entry name" value="TREHALASE"/>
    <property type="match status" value="1"/>
</dbReference>
<dbReference type="Pfam" id="PF01204">
    <property type="entry name" value="Trehalase"/>
    <property type="match status" value="1"/>
</dbReference>
<dbReference type="PRINTS" id="PR00744">
    <property type="entry name" value="GLHYDRLASE37"/>
</dbReference>
<dbReference type="SUPFAM" id="SSF48208">
    <property type="entry name" value="Six-hairpin glycosidases"/>
    <property type="match status" value="1"/>
</dbReference>
<dbReference type="PROSITE" id="PS00927">
    <property type="entry name" value="TREHALASE_1"/>
    <property type="match status" value="1"/>
</dbReference>
<dbReference type="PROSITE" id="PS00928">
    <property type="entry name" value="TREHALASE_2"/>
    <property type="match status" value="1"/>
</dbReference>
<protein>
    <recommendedName>
        <fullName evidence="1">Periplasmic trehalase</fullName>
        <ecNumber evidence="1">3.2.1.28</ecNumber>
    </recommendedName>
    <alternativeName>
        <fullName evidence="1">Alpha,alpha-trehalase</fullName>
    </alternativeName>
    <alternativeName>
        <fullName evidence="1">Alpha,alpha-trehalose glucohydrolase</fullName>
    </alternativeName>
</protein>